<gene>
    <name evidence="1" type="primary">leuS</name>
    <name type="ordered locus">BCc_274</name>
</gene>
<comment type="catalytic activity">
    <reaction evidence="1">
        <text>tRNA(Leu) + L-leucine + ATP = L-leucyl-tRNA(Leu) + AMP + diphosphate</text>
        <dbReference type="Rhea" id="RHEA:11688"/>
        <dbReference type="Rhea" id="RHEA-COMP:9613"/>
        <dbReference type="Rhea" id="RHEA-COMP:9622"/>
        <dbReference type="ChEBI" id="CHEBI:30616"/>
        <dbReference type="ChEBI" id="CHEBI:33019"/>
        <dbReference type="ChEBI" id="CHEBI:57427"/>
        <dbReference type="ChEBI" id="CHEBI:78442"/>
        <dbReference type="ChEBI" id="CHEBI:78494"/>
        <dbReference type="ChEBI" id="CHEBI:456215"/>
        <dbReference type="EC" id="6.1.1.4"/>
    </reaction>
</comment>
<comment type="subcellular location">
    <subcellularLocation>
        <location evidence="1">Cytoplasm</location>
    </subcellularLocation>
</comment>
<comment type="similarity">
    <text evidence="1">Belongs to the class-I aminoacyl-tRNA synthetase family.</text>
</comment>
<accession>Q057G3</accession>
<proteinExistence type="inferred from homology"/>
<reference key="1">
    <citation type="journal article" date="2006" name="Science">
        <title>A small microbial genome: the end of a long symbiotic relationship?</title>
        <authorList>
            <person name="Perez-Brocal V."/>
            <person name="Gil R."/>
            <person name="Ramos S."/>
            <person name="Lamelas A."/>
            <person name="Postigo M."/>
            <person name="Michelena J.M."/>
            <person name="Silva F.J."/>
            <person name="Moya A."/>
            <person name="Latorre A."/>
        </authorList>
    </citation>
    <scope>NUCLEOTIDE SEQUENCE [LARGE SCALE GENOMIC DNA]</scope>
    <source>
        <strain>Cc</strain>
    </source>
</reference>
<protein>
    <recommendedName>
        <fullName evidence="1">Leucine--tRNA ligase</fullName>
        <ecNumber evidence="1">6.1.1.4</ecNumber>
    </recommendedName>
    <alternativeName>
        <fullName evidence="1">Leucyl-tRNA synthetase</fullName>
        <shortName evidence="1">LeuRS</shortName>
    </alternativeName>
</protein>
<keyword id="KW-0030">Aminoacyl-tRNA synthetase</keyword>
<keyword id="KW-0067">ATP-binding</keyword>
<keyword id="KW-0963">Cytoplasm</keyword>
<keyword id="KW-0436">Ligase</keyword>
<keyword id="KW-0547">Nucleotide-binding</keyword>
<keyword id="KW-0648">Protein biosynthesis</keyword>
<keyword id="KW-1185">Reference proteome</keyword>
<evidence type="ECO:0000255" key="1">
    <source>
        <dbReference type="HAMAP-Rule" id="MF_00049"/>
    </source>
</evidence>
<name>SYL_BUCCC</name>
<organism>
    <name type="scientific">Buchnera aphidicola subsp. Cinara cedri (strain Cc)</name>
    <dbReference type="NCBI Taxonomy" id="372461"/>
    <lineage>
        <taxon>Bacteria</taxon>
        <taxon>Pseudomonadati</taxon>
        <taxon>Pseudomonadota</taxon>
        <taxon>Gammaproteobacteria</taxon>
        <taxon>Enterobacterales</taxon>
        <taxon>Erwiniaceae</taxon>
        <taxon>Buchnera</taxon>
    </lineage>
</organism>
<feature type="chain" id="PRO_0000334735" description="Leucine--tRNA ligase">
    <location>
        <begin position="1"/>
        <end position="847"/>
    </location>
</feature>
<feature type="short sequence motif" description="'HIGH' region">
    <location>
        <begin position="43"/>
        <end position="53"/>
    </location>
</feature>
<feature type="short sequence motif" description="'KMSKS' region">
    <location>
        <begin position="607"/>
        <end position="611"/>
    </location>
</feature>
<feature type="binding site" evidence="1">
    <location>
        <position position="610"/>
    </location>
    <ligand>
        <name>ATP</name>
        <dbReference type="ChEBI" id="CHEBI:30616"/>
    </ligand>
</feature>
<dbReference type="EC" id="6.1.1.4" evidence="1"/>
<dbReference type="EMBL" id="CP000263">
    <property type="protein sequence ID" value="ABJ90736.1"/>
    <property type="molecule type" value="Genomic_DNA"/>
</dbReference>
<dbReference type="RefSeq" id="WP_011672655.1">
    <property type="nucleotide sequence ID" value="NC_008513.1"/>
</dbReference>
<dbReference type="SMR" id="Q057G3"/>
<dbReference type="STRING" id="372461.BCc_274"/>
<dbReference type="KEGG" id="bcc:BCc_274"/>
<dbReference type="eggNOG" id="COG0495">
    <property type="taxonomic scope" value="Bacteria"/>
</dbReference>
<dbReference type="HOGENOM" id="CLU_004427_0_0_6"/>
<dbReference type="OrthoDB" id="9810365at2"/>
<dbReference type="Proteomes" id="UP000000669">
    <property type="component" value="Chromosome"/>
</dbReference>
<dbReference type="GO" id="GO:0005829">
    <property type="term" value="C:cytosol"/>
    <property type="evidence" value="ECO:0007669"/>
    <property type="project" value="TreeGrafter"/>
</dbReference>
<dbReference type="GO" id="GO:0002161">
    <property type="term" value="F:aminoacyl-tRNA deacylase activity"/>
    <property type="evidence" value="ECO:0007669"/>
    <property type="project" value="InterPro"/>
</dbReference>
<dbReference type="GO" id="GO:0005524">
    <property type="term" value="F:ATP binding"/>
    <property type="evidence" value="ECO:0007669"/>
    <property type="project" value="UniProtKB-UniRule"/>
</dbReference>
<dbReference type="GO" id="GO:0004823">
    <property type="term" value="F:leucine-tRNA ligase activity"/>
    <property type="evidence" value="ECO:0007669"/>
    <property type="project" value="UniProtKB-UniRule"/>
</dbReference>
<dbReference type="GO" id="GO:0006429">
    <property type="term" value="P:leucyl-tRNA aminoacylation"/>
    <property type="evidence" value="ECO:0007669"/>
    <property type="project" value="UniProtKB-UniRule"/>
</dbReference>
<dbReference type="CDD" id="cd07958">
    <property type="entry name" value="Anticodon_Ia_Leu_BEm"/>
    <property type="match status" value="1"/>
</dbReference>
<dbReference type="CDD" id="cd00812">
    <property type="entry name" value="LeuRS_core"/>
    <property type="match status" value="1"/>
</dbReference>
<dbReference type="FunFam" id="1.10.730.10:FF:000002">
    <property type="entry name" value="Leucine--tRNA ligase"/>
    <property type="match status" value="1"/>
</dbReference>
<dbReference type="FunFam" id="2.20.28.290:FF:000001">
    <property type="entry name" value="Leucine--tRNA ligase"/>
    <property type="match status" value="1"/>
</dbReference>
<dbReference type="Gene3D" id="2.20.28.290">
    <property type="match status" value="1"/>
</dbReference>
<dbReference type="Gene3D" id="3.10.20.590">
    <property type="match status" value="1"/>
</dbReference>
<dbReference type="Gene3D" id="3.40.50.620">
    <property type="entry name" value="HUPs"/>
    <property type="match status" value="2"/>
</dbReference>
<dbReference type="Gene3D" id="1.10.730.10">
    <property type="entry name" value="Isoleucyl-tRNA Synthetase, Domain 1"/>
    <property type="match status" value="1"/>
</dbReference>
<dbReference type="HAMAP" id="MF_00049_B">
    <property type="entry name" value="Leu_tRNA_synth_B"/>
    <property type="match status" value="1"/>
</dbReference>
<dbReference type="InterPro" id="IPR001412">
    <property type="entry name" value="aa-tRNA-synth_I_CS"/>
</dbReference>
<dbReference type="InterPro" id="IPR002300">
    <property type="entry name" value="aa-tRNA-synth_Ia"/>
</dbReference>
<dbReference type="InterPro" id="IPR002302">
    <property type="entry name" value="Leu-tRNA-ligase"/>
</dbReference>
<dbReference type="InterPro" id="IPR025709">
    <property type="entry name" value="Leu_tRNA-synth_edit"/>
</dbReference>
<dbReference type="InterPro" id="IPR013155">
    <property type="entry name" value="M/V/L/I-tRNA-synth_anticd-bd"/>
</dbReference>
<dbReference type="InterPro" id="IPR015413">
    <property type="entry name" value="Methionyl/Leucyl_tRNA_Synth"/>
</dbReference>
<dbReference type="InterPro" id="IPR014729">
    <property type="entry name" value="Rossmann-like_a/b/a_fold"/>
</dbReference>
<dbReference type="InterPro" id="IPR009080">
    <property type="entry name" value="tRNAsynth_Ia_anticodon-bd"/>
</dbReference>
<dbReference type="InterPro" id="IPR009008">
    <property type="entry name" value="Val/Leu/Ile-tRNA-synth_edit"/>
</dbReference>
<dbReference type="NCBIfam" id="TIGR00396">
    <property type="entry name" value="leuS_bact"/>
    <property type="match status" value="1"/>
</dbReference>
<dbReference type="PANTHER" id="PTHR43740:SF2">
    <property type="entry name" value="LEUCINE--TRNA LIGASE, MITOCHONDRIAL"/>
    <property type="match status" value="1"/>
</dbReference>
<dbReference type="PANTHER" id="PTHR43740">
    <property type="entry name" value="LEUCYL-TRNA SYNTHETASE"/>
    <property type="match status" value="1"/>
</dbReference>
<dbReference type="Pfam" id="PF08264">
    <property type="entry name" value="Anticodon_1"/>
    <property type="match status" value="1"/>
</dbReference>
<dbReference type="Pfam" id="PF00133">
    <property type="entry name" value="tRNA-synt_1"/>
    <property type="match status" value="2"/>
</dbReference>
<dbReference type="Pfam" id="PF13603">
    <property type="entry name" value="tRNA-synt_1_2"/>
    <property type="match status" value="1"/>
</dbReference>
<dbReference type="Pfam" id="PF09334">
    <property type="entry name" value="tRNA-synt_1g"/>
    <property type="match status" value="1"/>
</dbReference>
<dbReference type="PRINTS" id="PR00985">
    <property type="entry name" value="TRNASYNTHLEU"/>
</dbReference>
<dbReference type="SUPFAM" id="SSF47323">
    <property type="entry name" value="Anticodon-binding domain of a subclass of class I aminoacyl-tRNA synthetases"/>
    <property type="match status" value="1"/>
</dbReference>
<dbReference type="SUPFAM" id="SSF52374">
    <property type="entry name" value="Nucleotidylyl transferase"/>
    <property type="match status" value="1"/>
</dbReference>
<dbReference type="SUPFAM" id="SSF50677">
    <property type="entry name" value="ValRS/IleRS/LeuRS editing domain"/>
    <property type="match status" value="1"/>
</dbReference>
<dbReference type="PROSITE" id="PS00178">
    <property type="entry name" value="AA_TRNA_LIGASE_I"/>
    <property type="match status" value="1"/>
</dbReference>
<sequence>MKNNNYNPKKIEKYVQKYWVKKKIFFTKIDKEKKKFYCLPMLPYPSGKLHMGHVRNYTISDVISRFHRMLGKNVLQPIGWDSFGLPAEETAIKNNISPKKWTFKNIKTMKKQLQSLGFSYDWNKEITTCNPEYYRWEQLFFIKLFKKKLIYKKKSIVNWCEKDKTVLANEQVQKGVCWRCGTKIKLRKISQWFIKIKKYADKFLKDLKLLKKWPKEVISMQKNWIGKSKGLKIKCKIYKKKYFLKIFTTKPETIMGISFFAISMYHPLINLFLRKNIEIQKFLKKNKYSINTEFQKSNILFGINTHLYVIHPINKKKIPLWISNYVKYNYATGAIMSVPCSNKIDYNFSKLYNIPFIKIFSKKNKKLLINSDNFNNLNIKKARNKISNFLINKKIAKKYIYYKIQDWCISRQRYWGTPIPIVIDNKKNIITVPKKKLPVILPKYIYKKKSLQSLSLYSLWLKTKISGKKVTRETDTLDTFMESSWYYARYTNPKYEKDIIDPKASEYWLPVDQYIGGIEHAVMHLIYFRFYHKLLYDFGYVQSKEPVKKLICQGMVIIDSFYKYNKDGSKKWLSISKIEINRDSKGKIISAIEKSSQKKIIYAGKIKMSKSKNNGIDPVNIIKQYGADSLRLFIMFAAPINISLEWNSKNIIGMHRFLKKIWNFVFIIIKKKKEKIKKIDLNKNKKTYIYKLNTIIKKVTYNIQERNSFNTAIAEIIKFFNYLVKLYKIYNIKKKNLIFCISTIIKMLYPFTPHICFILWKKIYGKKSCIEKETWPKFNKKFFLKEKNNIIIQINGKKKDIMKIHAIISKKEIIKLILKNEKIKKHLYKKIIKKTIYIPNKVINFVL</sequence>